<name>ATPD_ACICJ</name>
<sequence>MSSAVSASPQAASPQQDRTSGLSARYARALYELADERKQLDEVVSEMAALGRLFAEDPSLRRLIASRSIDAREAGRAMEQVLASQGVSDLVRNFIGTAIANRRLADLPSLVAGFAVYVAEKRGVVAADIASAHPLTDTQRAQLTARLAEAGYGRVTIRETVDPSLLGGLTVRIGSKLYDTSLKSRLQRLRHVMKGAA</sequence>
<proteinExistence type="inferred from homology"/>
<keyword id="KW-0066">ATP synthesis</keyword>
<keyword id="KW-0997">Cell inner membrane</keyword>
<keyword id="KW-1003">Cell membrane</keyword>
<keyword id="KW-0139">CF(1)</keyword>
<keyword id="KW-0375">Hydrogen ion transport</keyword>
<keyword id="KW-0406">Ion transport</keyword>
<keyword id="KW-0472">Membrane</keyword>
<keyword id="KW-1185">Reference proteome</keyword>
<keyword id="KW-0813">Transport</keyword>
<accession>A5FZ51</accession>
<comment type="function">
    <text evidence="1">F(1)F(0) ATP synthase produces ATP from ADP in the presence of a proton or sodium gradient. F-type ATPases consist of two structural domains, F(1) containing the extramembraneous catalytic core and F(0) containing the membrane proton channel, linked together by a central stalk and a peripheral stalk. During catalysis, ATP synthesis in the catalytic domain of F(1) is coupled via a rotary mechanism of the central stalk subunits to proton translocation.</text>
</comment>
<comment type="function">
    <text evidence="1">This protein is part of the stalk that links CF(0) to CF(1). It either transmits conformational changes from CF(0) to CF(1) or is implicated in proton conduction.</text>
</comment>
<comment type="subunit">
    <text evidence="1">F-type ATPases have 2 components, F(1) - the catalytic core - and F(0) - the membrane proton channel. F(1) has five subunits: alpha(3), beta(3), gamma(1), delta(1), epsilon(1). F(0) has three main subunits: a(1), b(2) and c(10-14). The alpha and beta chains form an alternating ring which encloses part of the gamma chain. F(1) is attached to F(0) by a central stalk formed by the gamma and epsilon chains, while a peripheral stalk is formed by the delta and b chains.</text>
</comment>
<comment type="subcellular location">
    <subcellularLocation>
        <location evidence="1">Cell inner membrane</location>
        <topology evidence="1">Peripheral membrane protein</topology>
    </subcellularLocation>
</comment>
<comment type="similarity">
    <text evidence="1">Belongs to the ATPase delta chain family.</text>
</comment>
<dbReference type="EMBL" id="CP000697">
    <property type="protein sequence ID" value="ABQ30883.1"/>
    <property type="molecule type" value="Genomic_DNA"/>
</dbReference>
<dbReference type="RefSeq" id="WP_007423086.1">
    <property type="nucleotide sequence ID" value="NC_009484.1"/>
</dbReference>
<dbReference type="SMR" id="A5FZ51"/>
<dbReference type="STRING" id="349163.Acry_1678"/>
<dbReference type="KEGG" id="acr:Acry_1678"/>
<dbReference type="eggNOG" id="COG0712">
    <property type="taxonomic scope" value="Bacteria"/>
</dbReference>
<dbReference type="HOGENOM" id="CLU_085114_0_1_5"/>
<dbReference type="Proteomes" id="UP000000245">
    <property type="component" value="Chromosome"/>
</dbReference>
<dbReference type="GO" id="GO:0005886">
    <property type="term" value="C:plasma membrane"/>
    <property type="evidence" value="ECO:0007669"/>
    <property type="project" value="UniProtKB-SubCell"/>
</dbReference>
<dbReference type="GO" id="GO:0045259">
    <property type="term" value="C:proton-transporting ATP synthase complex"/>
    <property type="evidence" value="ECO:0007669"/>
    <property type="project" value="UniProtKB-KW"/>
</dbReference>
<dbReference type="GO" id="GO:0046933">
    <property type="term" value="F:proton-transporting ATP synthase activity, rotational mechanism"/>
    <property type="evidence" value="ECO:0007669"/>
    <property type="project" value="UniProtKB-UniRule"/>
</dbReference>
<dbReference type="Gene3D" id="1.10.520.20">
    <property type="entry name" value="N-terminal domain of the delta subunit of the F1F0-ATP synthase"/>
    <property type="match status" value="1"/>
</dbReference>
<dbReference type="HAMAP" id="MF_01416">
    <property type="entry name" value="ATP_synth_delta_bact"/>
    <property type="match status" value="1"/>
</dbReference>
<dbReference type="InterPro" id="IPR026015">
    <property type="entry name" value="ATP_synth_OSCP/delta_N_sf"/>
</dbReference>
<dbReference type="InterPro" id="IPR020781">
    <property type="entry name" value="ATPase_OSCP/d_CS"/>
</dbReference>
<dbReference type="InterPro" id="IPR000711">
    <property type="entry name" value="ATPase_OSCP/dsu"/>
</dbReference>
<dbReference type="NCBIfam" id="TIGR01145">
    <property type="entry name" value="ATP_synt_delta"/>
    <property type="match status" value="1"/>
</dbReference>
<dbReference type="NCBIfam" id="NF004406">
    <property type="entry name" value="PRK05758.3-2"/>
    <property type="match status" value="1"/>
</dbReference>
<dbReference type="PANTHER" id="PTHR11910">
    <property type="entry name" value="ATP SYNTHASE DELTA CHAIN"/>
    <property type="match status" value="1"/>
</dbReference>
<dbReference type="Pfam" id="PF00213">
    <property type="entry name" value="OSCP"/>
    <property type="match status" value="1"/>
</dbReference>
<dbReference type="PRINTS" id="PR00125">
    <property type="entry name" value="ATPASEDELTA"/>
</dbReference>
<dbReference type="SUPFAM" id="SSF47928">
    <property type="entry name" value="N-terminal domain of the delta subunit of the F1F0-ATP synthase"/>
    <property type="match status" value="1"/>
</dbReference>
<dbReference type="PROSITE" id="PS00389">
    <property type="entry name" value="ATPASE_DELTA"/>
    <property type="match status" value="1"/>
</dbReference>
<evidence type="ECO:0000255" key="1">
    <source>
        <dbReference type="HAMAP-Rule" id="MF_01416"/>
    </source>
</evidence>
<evidence type="ECO:0000256" key="2">
    <source>
        <dbReference type="SAM" id="MobiDB-lite"/>
    </source>
</evidence>
<protein>
    <recommendedName>
        <fullName evidence="1">ATP synthase subunit delta</fullName>
    </recommendedName>
    <alternativeName>
        <fullName evidence="1">ATP synthase F(1) sector subunit delta</fullName>
    </alternativeName>
    <alternativeName>
        <fullName evidence="1">F-type ATPase subunit delta</fullName>
        <shortName evidence="1">F-ATPase subunit delta</shortName>
    </alternativeName>
</protein>
<gene>
    <name evidence="1" type="primary">atpH</name>
    <name type="ordered locus">Acry_1678</name>
</gene>
<feature type="chain" id="PRO_0000370865" description="ATP synthase subunit delta">
    <location>
        <begin position="1"/>
        <end position="197"/>
    </location>
</feature>
<feature type="region of interest" description="Disordered" evidence="2">
    <location>
        <begin position="1"/>
        <end position="20"/>
    </location>
</feature>
<feature type="compositionally biased region" description="Low complexity" evidence="2">
    <location>
        <begin position="1"/>
        <end position="16"/>
    </location>
</feature>
<reference key="1">
    <citation type="submission" date="2007-05" db="EMBL/GenBank/DDBJ databases">
        <title>Complete sequence of chromosome of Acidiphilium cryptum JF-5.</title>
        <authorList>
            <consortium name="US DOE Joint Genome Institute"/>
            <person name="Copeland A."/>
            <person name="Lucas S."/>
            <person name="Lapidus A."/>
            <person name="Barry K."/>
            <person name="Detter J.C."/>
            <person name="Glavina del Rio T."/>
            <person name="Hammon N."/>
            <person name="Israni S."/>
            <person name="Dalin E."/>
            <person name="Tice H."/>
            <person name="Pitluck S."/>
            <person name="Sims D."/>
            <person name="Brettin T."/>
            <person name="Bruce D."/>
            <person name="Han C."/>
            <person name="Schmutz J."/>
            <person name="Larimer F."/>
            <person name="Land M."/>
            <person name="Hauser L."/>
            <person name="Kyrpides N."/>
            <person name="Kim E."/>
            <person name="Magnuson T."/>
            <person name="Richardson P."/>
        </authorList>
    </citation>
    <scope>NUCLEOTIDE SEQUENCE [LARGE SCALE GENOMIC DNA]</scope>
    <source>
        <strain>JF-5</strain>
    </source>
</reference>
<organism>
    <name type="scientific">Acidiphilium cryptum (strain JF-5)</name>
    <dbReference type="NCBI Taxonomy" id="349163"/>
    <lineage>
        <taxon>Bacteria</taxon>
        <taxon>Pseudomonadati</taxon>
        <taxon>Pseudomonadota</taxon>
        <taxon>Alphaproteobacteria</taxon>
        <taxon>Acetobacterales</taxon>
        <taxon>Acidocellaceae</taxon>
        <taxon>Acidiphilium</taxon>
    </lineage>
</organism>